<organism>
    <name type="scientific">Methanocaldococcus jannaschii (strain ATCC 43067 / DSM 2661 / JAL-1 / JCM 10045 / NBRC 100440)</name>
    <name type="common">Methanococcus jannaschii</name>
    <dbReference type="NCBI Taxonomy" id="243232"/>
    <lineage>
        <taxon>Archaea</taxon>
        <taxon>Methanobacteriati</taxon>
        <taxon>Methanobacteriota</taxon>
        <taxon>Methanomada group</taxon>
        <taxon>Methanococci</taxon>
        <taxon>Methanococcales</taxon>
        <taxon>Methanocaldococcaceae</taxon>
        <taxon>Methanocaldococcus</taxon>
    </lineage>
</organism>
<sequence length="96" mass="11201">MLPKATVKRIMKQHTDFNISAEAVDELCNMLEEIIKITTEVAEQNARKEGRKTIKARDIKQCDDERLKRKIMELSERTDKMPILIKEMLNVITSEL</sequence>
<accession>Q59041</accession>
<proteinExistence type="evidence at protein level"/>
<comment type="function">
    <text evidence="1">Binds and compact DNA (95 to 150 base pairs) to form nucleosome-like structures that contain positive DNA supercoils. Increases the resistance of DNA to thermal denaturation (in vitro).</text>
</comment>
<comment type="subunit">
    <text evidence="1 2">Homodimer (PubMed:10741836). Dimers then assemble into higher oligomers, with the DNA wrapped around the protein core (By similarity).</text>
</comment>
<comment type="subcellular location">
    <subcellularLocation>
        <location evidence="3">Cytoplasm</location>
    </subcellularLocation>
    <subcellularLocation>
        <location evidence="3">Chromosome</location>
    </subcellularLocation>
</comment>
<comment type="similarity">
    <text evidence="3">Belongs to the archaeal histone HMF family.</text>
</comment>
<dbReference type="EMBL" id="L77117">
    <property type="protein sequence ID" value="AAB99668.1"/>
    <property type="molecule type" value="Genomic_DNA"/>
</dbReference>
<dbReference type="PIR" id="E64505">
    <property type="entry name" value="E64505"/>
</dbReference>
<dbReference type="RefSeq" id="WP_010871171.1">
    <property type="nucleotide sequence ID" value="NC_000909.1"/>
</dbReference>
<dbReference type="PDB" id="8BDK">
    <property type="method" value="X-ray"/>
    <property type="resolution" value="1.88 A"/>
    <property type="chains" value="A/B/D/E=1-96"/>
</dbReference>
<dbReference type="PDBsum" id="8BDK"/>
<dbReference type="SMR" id="Q59041"/>
<dbReference type="FunCoup" id="Q59041">
    <property type="interactions" value="1"/>
</dbReference>
<dbReference type="STRING" id="243232.MJ_1647"/>
<dbReference type="PaxDb" id="243232-MJ_1647"/>
<dbReference type="EnsemblBacteria" id="AAB99668">
    <property type="protein sequence ID" value="AAB99668"/>
    <property type="gene ID" value="MJ_1647"/>
</dbReference>
<dbReference type="GeneID" id="1452556"/>
<dbReference type="KEGG" id="mja:MJ_1647"/>
<dbReference type="eggNOG" id="arCOG02145">
    <property type="taxonomic scope" value="Archaea"/>
</dbReference>
<dbReference type="HOGENOM" id="CLU_2340228_0_0_2"/>
<dbReference type="InParanoid" id="Q59041"/>
<dbReference type="OrthoDB" id="7514at2157"/>
<dbReference type="Proteomes" id="UP000000805">
    <property type="component" value="Chromosome"/>
</dbReference>
<dbReference type="GO" id="GO:0005694">
    <property type="term" value="C:chromosome"/>
    <property type="evidence" value="ECO:0007669"/>
    <property type="project" value="UniProtKB-SubCell"/>
</dbReference>
<dbReference type="GO" id="GO:0005737">
    <property type="term" value="C:cytoplasm"/>
    <property type="evidence" value="ECO:0007669"/>
    <property type="project" value="UniProtKB-SubCell"/>
</dbReference>
<dbReference type="GO" id="GO:0003677">
    <property type="term" value="F:DNA binding"/>
    <property type="evidence" value="ECO:0007669"/>
    <property type="project" value="UniProtKB-KW"/>
</dbReference>
<dbReference type="GO" id="GO:0046982">
    <property type="term" value="F:protein heterodimerization activity"/>
    <property type="evidence" value="ECO:0007669"/>
    <property type="project" value="InterPro"/>
</dbReference>
<dbReference type="CDD" id="cd22909">
    <property type="entry name" value="HFD_archaea_histone-like"/>
    <property type="match status" value="1"/>
</dbReference>
<dbReference type="Gene3D" id="1.10.20.10">
    <property type="entry name" value="Histone, subunit A"/>
    <property type="match status" value="1"/>
</dbReference>
<dbReference type="InterPro" id="IPR003958">
    <property type="entry name" value="CBFA_NFYB_domain"/>
</dbReference>
<dbReference type="InterPro" id="IPR009072">
    <property type="entry name" value="Histone-fold"/>
</dbReference>
<dbReference type="InterPro" id="IPR050004">
    <property type="entry name" value="HmfB-like"/>
</dbReference>
<dbReference type="NCBIfam" id="NF043032">
    <property type="entry name" value="archaea_histone"/>
    <property type="match status" value="1"/>
</dbReference>
<dbReference type="Pfam" id="PF00808">
    <property type="entry name" value="CBFD_NFYB_HMF"/>
    <property type="match status" value="1"/>
</dbReference>
<dbReference type="SUPFAM" id="SSF47113">
    <property type="entry name" value="Histone-fold"/>
    <property type="match status" value="1"/>
</dbReference>
<feature type="chain" id="PRO_0000155005" description="DNA-binding protein HmvA">
    <location>
        <begin position="1"/>
        <end position="96"/>
    </location>
</feature>
<feature type="region of interest" description="Interaction with DNA" evidence="1">
    <location>
        <begin position="52"/>
        <end position="55"/>
    </location>
</feature>
<feature type="site" description="Interaction with DNA" evidence="1">
    <location>
        <position position="12"/>
    </location>
</feature>
<feature type="helix" evidence="4">
    <location>
        <begin position="4"/>
        <end position="11"/>
    </location>
</feature>
<feature type="strand" evidence="4">
    <location>
        <begin position="16"/>
        <end position="19"/>
    </location>
</feature>
<feature type="helix" evidence="4">
    <location>
        <begin position="21"/>
        <end position="48"/>
    </location>
</feature>
<feature type="strand" evidence="4">
    <location>
        <begin position="52"/>
        <end position="54"/>
    </location>
</feature>
<feature type="helix" evidence="4">
    <location>
        <begin position="56"/>
        <end position="58"/>
    </location>
</feature>
<feature type="helix" evidence="4">
    <location>
        <begin position="64"/>
        <end position="74"/>
    </location>
</feature>
<feature type="helix" evidence="4">
    <location>
        <begin position="83"/>
        <end position="95"/>
    </location>
</feature>
<keyword id="KW-0002">3D-structure</keyword>
<keyword id="KW-0158">Chromosome</keyword>
<keyword id="KW-0963">Cytoplasm</keyword>
<keyword id="KW-0238">DNA-binding</keyword>
<keyword id="KW-1185">Reference proteome</keyword>
<gene>
    <name type="primary">hmvA</name>
    <name type="ordered locus">MJ1647</name>
</gene>
<name>HMVA_METJA</name>
<reference key="1">
    <citation type="journal article" date="1996" name="Science">
        <title>Complete genome sequence of the methanogenic archaeon, Methanococcus jannaschii.</title>
        <authorList>
            <person name="Bult C.J."/>
            <person name="White O."/>
            <person name="Olsen G.J."/>
            <person name="Zhou L."/>
            <person name="Fleischmann R.D."/>
            <person name="Sutton G.G."/>
            <person name="Blake J.A."/>
            <person name="FitzGerald L.M."/>
            <person name="Clayton R.A."/>
            <person name="Gocayne J.D."/>
            <person name="Kerlavage A.R."/>
            <person name="Dougherty B.A."/>
            <person name="Tomb J.-F."/>
            <person name="Adams M.D."/>
            <person name="Reich C.I."/>
            <person name="Overbeek R."/>
            <person name="Kirkness E.F."/>
            <person name="Weinstock K.G."/>
            <person name="Merrick J.M."/>
            <person name="Glodek A."/>
            <person name="Scott J.L."/>
            <person name="Geoghagen N.S.M."/>
            <person name="Weidman J.F."/>
            <person name="Fuhrmann J.L."/>
            <person name="Nguyen D."/>
            <person name="Utterback T.R."/>
            <person name="Kelley J.M."/>
            <person name="Peterson J.D."/>
            <person name="Sadow P.W."/>
            <person name="Hanna M.C."/>
            <person name="Cotton M.D."/>
            <person name="Roberts K.M."/>
            <person name="Hurst M.A."/>
            <person name="Kaine B.P."/>
            <person name="Borodovsky M."/>
            <person name="Klenk H.-P."/>
            <person name="Fraser C.M."/>
            <person name="Smith H.O."/>
            <person name="Woese C.R."/>
            <person name="Venter J.C."/>
        </authorList>
    </citation>
    <scope>NUCLEOTIDE SEQUENCE [LARGE SCALE GENOMIC DNA]</scope>
    <source>
        <strain>ATCC 43067 / DSM 2661 / JAL-1 / JCM 10045 / NBRC 100440</strain>
    </source>
</reference>
<reference key="2">
    <citation type="journal article" date="2000" name="Extremophiles">
        <title>MJ1647, an open reading frame in the genome of the hyperthermophile Methanococcus jannaschii, encodes a very thermostable archaeal histone with a C-terminal extension.</title>
        <authorList>
            <person name="Li W.-T."/>
            <person name="Sandman K."/>
            <person name="Pereira S.L."/>
            <person name="Reeve J.N."/>
        </authorList>
    </citation>
    <scope>SUBUNIT</scope>
</reference>
<protein>
    <recommendedName>
        <fullName>DNA-binding protein HmvA</fullName>
    </recommendedName>
</protein>
<evidence type="ECO:0000250" key="1">
    <source>
        <dbReference type="UniProtKB" id="P19267"/>
    </source>
</evidence>
<evidence type="ECO:0000269" key="2">
    <source>
    </source>
</evidence>
<evidence type="ECO:0000305" key="3"/>
<evidence type="ECO:0007829" key="4">
    <source>
        <dbReference type="PDB" id="8BDK"/>
    </source>
</evidence>